<keyword id="KW-0414">Isoprene biosynthesis</keyword>
<keyword id="KW-0464">Manganese</keyword>
<keyword id="KW-0479">Metal-binding</keyword>
<keyword id="KW-0521">NADP</keyword>
<keyword id="KW-0560">Oxidoreductase</keyword>
<proteinExistence type="inferred from homology"/>
<comment type="function">
    <text evidence="1">Catalyzes the NADPH-dependent rearrangement and reduction of 1-deoxy-D-xylulose-5-phosphate (DXP) to 2-C-methyl-D-erythritol 4-phosphate (MEP).</text>
</comment>
<comment type="catalytic activity">
    <reaction evidence="1">
        <text>2-C-methyl-D-erythritol 4-phosphate + NADP(+) = 1-deoxy-D-xylulose 5-phosphate + NADPH + H(+)</text>
        <dbReference type="Rhea" id="RHEA:13717"/>
        <dbReference type="ChEBI" id="CHEBI:15378"/>
        <dbReference type="ChEBI" id="CHEBI:57783"/>
        <dbReference type="ChEBI" id="CHEBI:57792"/>
        <dbReference type="ChEBI" id="CHEBI:58262"/>
        <dbReference type="ChEBI" id="CHEBI:58349"/>
        <dbReference type="EC" id="1.1.1.267"/>
    </reaction>
    <physiologicalReaction direction="right-to-left" evidence="1">
        <dbReference type="Rhea" id="RHEA:13719"/>
    </physiologicalReaction>
</comment>
<comment type="cofactor">
    <cofactor evidence="1">
        <name>Mg(2+)</name>
        <dbReference type="ChEBI" id="CHEBI:18420"/>
    </cofactor>
    <cofactor evidence="1">
        <name>Mn(2+)</name>
        <dbReference type="ChEBI" id="CHEBI:29035"/>
    </cofactor>
</comment>
<comment type="pathway">
    <text evidence="1">Isoprenoid biosynthesis; isopentenyl diphosphate biosynthesis via DXP pathway; isopentenyl diphosphate from 1-deoxy-D-xylulose 5-phosphate: step 1/6.</text>
</comment>
<comment type="similarity">
    <text evidence="1">Belongs to the DXR family.</text>
</comment>
<gene>
    <name evidence="1" type="primary">dxr</name>
    <name type="ordered locus">TC_0343</name>
</gene>
<organism>
    <name type="scientific">Chlamydia muridarum (strain MoPn / Nigg)</name>
    <dbReference type="NCBI Taxonomy" id="243161"/>
    <lineage>
        <taxon>Bacteria</taxon>
        <taxon>Pseudomonadati</taxon>
        <taxon>Chlamydiota</taxon>
        <taxon>Chlamydiia</taxon>
        <taxon>Chlamydiales</taxon>
        <taxon>Chlamydiaceae</taxon>
        <taxon>Chlamydia/Chlamydophila group</taxon>
        <taxon>Chlamydia</taxon>
    </lineage>
</organism>
<protein>
    <recommendedName>
        <fullName evidence="1">1-deoxy-D-xylulose 5-phosphate reductoisomerase</fullName>
        <shortName evidence="1">DXP reductoisomerase</shortName>
        <ecNumber evidence="1">1.1.1.267</ecNumber>
    </recommendedName>
    <alternativeName>
        <fullName evidence="1">1-deoxyxylulose-5-phosphate reductoisomerase</fullName>
    </alternativeName>
    <alternativeName>
        <fullName evidence="1">2-C-methyl-D-erythritol 4-phosphate synthase</fullName>
    </alternativeName>
</protein>
<sequence length="379" mass="41811">MKRLALIGSTGSIGKQVLQVIREIPDAFVIETLAAYGRNRESLISQIREFSPRVVAVRDETTYKELRKLFPHIEILSGEEGLIAVATAASVDMTIVASSGIDALPAVMASIQERKTIALANKESLVAAGELVTTLAKKNHVQILPIDSEHNALFQCLEGRDPSTIKKLILTASGGPLRNKSKEELQKVTLQEVLKHPIWDMGPKITVDSSTLVNKGLEIIEAFWLFGLQAVEIEAVIHPQSLIHGMVEFCDGTILSVMNPPSMLFPIQHVLTFPDRYPSIISGLNFLTNQTLEFLPIDDERFPSIRLAKDVLREGGSMGCFFNGANEALVQRFLSGEIAWYQIVSKLQTLMDKYVVRSCLSLEDILQVDSEARALASEC</sequence>
<accession>Q9PKW8</accession>
<name>DXR_CHLMU</name>
<feature type="chain" id="PRO_0000163629" description="1-deoxy-D-xylulose 5-phosphate reductoisomerase">
    <location>
        <begin position="1"/>
        <end position="379"/>
    </location>
</feature>
<feature type="binding site" evidence="1">
    <location>
        <position position="10"/>
    </location>
    <ligand>
        <name>NADPH</name>
        <dbReference type="ChEBI" id="CHEBI:57783"/>
    </ligand>
</feature>
<feature type="binding site" evidence="1">
    <location>
        <position position="11"/>
    </location>
    <ligand>
        <name>NADPH</name>
        <dbReference type="ChEBI" id="CHEBI:57783"/>
    </ligand>
</feature>
<feature type="binding site" evidence="1">
    <location>
        <position position="12"/>
    </location>
    <ligand>
        <name>NADPH</name>
        <dbReference type="ChEBI" id="CHEBI:57783"/>
    </ligand>
</feature>
<feature type="binding site" evidence="1">
    <location>
        <position position="13"/>
    </location>
    <ligand>
        <name>NADPH</name>
        <dbReference type="ChEBI" id="CHEBI:57783"/>
    </ligand>
</feature>
<feature type="binding site" evidence="1">
    <location>
        <position position="38"/>
    </location>
    <ligand>
        <name>NADPH</name>
        <dbReference type="ChEBI" id="CHEBI:57783"/>
    </ligand>
</feature>
<feature type="binding site" evidence="1">
    <location>
        <position position="39"/>
    </location>
    <ligand>
        <name>NADPH</name>
        <dbReference type="ChEBI" id="CHEBI:57783"/>
    </ligand>
</feature>
<feature type="binding site" evidence="1">
    <location>
        <position position="121"/>
    </location>
    <ligand>
        <name>NADPH</name>
        <dbReference type="ChEBI" id="CHEBI:57783"/>
    </ligand>
</feature>
<feature type="binding site" evidence="1">
    <location>
        <position position="122"/>
    </location>
    <ligand>
        <name>1-deoxy-D-xylulose 5-phosphate</name>
        <dbReference type="ChEBI" id="CHEBI:57792"/>
    </ligand>
</feature>
<feature type="binding site" evidence="1">
    <location>
        <position position="123"/>
    </location>
    <ligand>
        <name>NADPH</name>
        <dbReference type="ChEBI" id="CHEBI:57783"/>
    </ligand>
</feature>
<feature type="binding site" evidence="1">
    <location>
        <position position="147"/>
    </location>
    <ligand>
        <name>Mn(2+)</name>
        <dbReference type="ChEBI" id="CHEBI:29035"/>
    </ligand>
</feature>
<feature type="binding site" evidence="1">
    <location>
        <position position="148"/>
    </location>
    <ligand>
        <name>1-deoxy-D-xylulose 5-phosphate</name>
        <dbReference type="ChEBI" id="CHEBI:57792"/>
    </ligand>
</feature>
<feature type="binding site" evidence="1">
    <location>
        <position position="149"/>
    </location>
    <ligand>
        <name>1-deoxy-D-xylulose 5-phosphate</name>
        <dbReference type="ChEBI" id="CHEBI:57792"/>
    </ligand>
</feature>
<feature type="binding site" evidence="1">
    <location>
        <position position="149"/>
    </location>
    <ligand>
        <name>Mn(2+)</name>
        <dbReference type="ChEBI" id="CHEBI:29035"/>
    </ligand>
</feature>
<feature type="binding site" evidence="1">
    <location>
        <position position="173"/>
    </location>
    <ligand>
        <name>1-deoxy-D-xylulose 5-phosphate</name>
        <dbReference type="ChEBI" id="CHEBI:57792"/>
    </ligand>
</feature>
<feature type="binding site" evidence="1">
    <location>
        <position position="196"/>
    </location>
    <ligand>
        <name>1-deoxy-D-xylulose 5-phosphate</name>
        <dbReference type="ChEBI" id="CHEBI:57792"/>
    </ligand>
</feature>
<feature type="binding site" evidence="1">
    <location>
        <position position="202"/>
    </location>
    <ligand>
        <name>NADPH</name>
        <dbReference type="ChEBI" id="CHEBI:57783"/>
    </ligand>
</feature>
<feature type="binding site" evidence="1">
    <location>
        <position position="209"/>
    </location>
    <ligand>
        <name>1-deoxy-D-xylulose 5-phosphate</name>
        <dbReference type="ChEBI" id="CHEBI:57792"/>
    </ligand>
</feature>
<feature type="binding site" evidence="1">
    <location>
        <position position="214"/>
    </location>
    <ligand>
        <name>1-deoxy-D-xylulose 5-phosphate</name>
        <dbReference type="ChEBI" id="CHEBI:57792"/>
    </ligand>
</feature>
<feature type="binding site" evidence="1">
    <location>
        <position position="215"/>
    </location>
    <ligand>
        <name>1-deoxy-D-xylulose 5-phosphate</name>
        <dbReference type="ChEBI" id="CHEBI:57792"/>
    </ligand>
</feature>
<feature type="binding site" evidence="1">
    <location>
        <position position="218"/>
    </location>
    <ligand>
        <name>1-deoxy-D-xylulose 5-phosphate</name>
        <dbReference type="ChEBI" id="CHEBI:57792"/>
    </ligand>
</feature>
<feature type="binding site" evidence="1">
    <location>
        <position position="218"/>
    </location>
    <ligand>
        <name>Mn(2+)</name>
        <dbReference type="ChEBI" id="CHEBI:29035"/>
    </ligand>
</feature>
<evidence type="ECO:0000255" key="1">
    <source>
        <dbReference type="HAMAP-Rule" id="MF_00183"/>
    </source>
</evidence>
<reference key="1">
    <citation type="journal article" date="2000" name="Nucleic Acids Res.">
        <title>Genome sequences of Chlamydia trachomatis MoPn and Chlamydia pneumoniae AR39.</title>
        <authorList>
            <person name="Read T.D."/>
            <person name="Brunham R.C."/>
            <person name="Shen C."/>
            <person name="Gill S.R."/>
            <person name="Heidelberg J.F."/>
            <person name="White O."/>
            <person name="Hickey E.K."/>
            <person name="Peterson J.D."/>
            <person name="Utterback T.R."/>
            <person name="Berry K.J."/>
            <person name="Bass S."/>
            <person name="Linher K.D."/>
            <person name="Weidman J.F."/>
            <person name="Khouri H.M."/>
            <person name="Craven B."/>
            <person name="Bowman C."/>
            <person name="Dodson R.J."/>
            <person name="Gwinn M.L."/>
            <person name="Nelson W.C."/>
            <person name="DeBoy R.T."/>
            <person name="Kolonay J.F."/>
            <person name="McClarty G."/>
            <person name="Salzberg S.L."/>
            <person name="Eisen J.A."/>
            <person name="Fraser C.M."/>
        </authorList>
    </citation>
    <scope>NUCLEOTIDE SEQUENCE [LARGE SCALE GENOMIC DNA]</scope>
    <source>
        <strain>MoPn / Nigg</strain>
    </source>
</reference>
<dbReference type="EC" id="1.1.1.267" evidence="1"/>
<dbReference type="EMBL" id="AE002160">
    <property type="protein sequence ID" value="AAF39204.1"/>
    <property type="molecule type" value="Genomic_DNA"/>
</dbReference>
<dbReference type="PIR" id="G81712">
    <property type="entry name" value="G81712"/>
</dbReference>
<dbReference type="RefSeq" id="WP_010904317.1">
    <property type="nucleotide sequence ID" value="NC_002620.2"/>
</dbReference>
<dbReference type="SMR" id="Q9PKW8"/>
<dbReference type="GeneID" id="1246386"/>
<dbReference type="KEGG" id="cmu:TC_0343"/>
<dbReference type="PATRIC" id="fig|243161.6.peg.371"/>
<dbReference type="eggNOG" id="COG0743">
    <property type="taxonomic scope" value="Bacteria"/>
</dbReference>
<dbReference type="HOGENOM" id="CLU_035714_4_0_0"/>
<dbReference type="UniPathway" id="UPA00056">
    <property type="reaction ID" value="UER00092"/>
</dbReference>
<dbReference type="Proteomes" id="UP000000800">
    <property type="component" value="Chromosome"/>
</dbReference>
<dbReference type="GO" id="GO:0030604">
    <property type="term" value="F:1-deoxy-D-xylulose-5-phosphate reductoisomerase activity"/>
    <property type="evidence" value="ECO:0007669"/>
    <property type="project" value="UniProtKB-UniRule"/>
</dbReference>
<dbReference type="GO" id="GO:0030145">
    <property type="term" value="F:manganese ion binding"/>
    <property type="evidence" value="ECO:0007669"/>
    <property type="project" value="TreeGrafter"/>
</dbReference>
<dbReference type="GO" id="GO:0070402">
    <property type="term" value="F:NADPH binding"/>
    <property type="evidence" value="ECO:0007669"/>
    <property type="project" value="InterPro"/>
</dbReference>
<dbReference type="GO" id="GO:0051484">
    <property type="term" value="P:isopentenyl diphosphate biosynthetic process, methylerythritol 4-phosphate pathway involved in terpenoid biosynthetic process"/>
    <property type="evidence" value="ECO:0007669"/>
    <property type="project" value="TreeGrafter"/>
</dbReference>
<dbReference type="FunFam" id="3.40.50.720:FF:000045">
    <property type="entry name" value="1-deoxy-D-xylulose 5-phosphate reductoisomerase"/>
    <property type="match status" value="1"/>
</dbReference>
<dbReference type="Gene3D" id="1.10.1740.10">
    <property type="match status" value="1"/>
</dbReference>
<dbReference type="Gene3D" id="3.40.50.720">
    <property type="entry name" value="NAD(P)-binding Rossmann-like Domain"/>
    <property type="match status" value="1"/>
</dbReference>
<dbReference type="HAMAP" id="MF_00183">
    <property type="entry name" value="DXP_reductoisom"/>
    <property type="match status" value="1"/>
</dbReference>
<dbReference type="InterPro" id="IPR003821">
    <property type="entry name" value="DXP_reductoisomerase"/>
</dbReference>
<dbReference type="InterPro" id="IPR013644">
    <property type="entry name" value="DXP_reductoisomerase_C"/>
</dbReference>
<dbReference type="InterPro" id="IPR013512">
    <property type="entry name" value="DXP_reductoisomerase_N"/>
</dbReference>
<dbReference type="InterPro" id="IPR026877">
    <property type="entry name" value="DXPR_C"/>
</dbReference>
<dbReference type="InterPro" id="IPR036169">
    <property type="entry name" value="DXPR_C_sf"/>
</dbReference>
<dbReference type="InterPro" id="IPR036291">
    <property type="entry name" value="NAD(P)-bd_dom_sf"/>
</dbReference>
<dbReference type="NCBIfam" id="TIGR00243">
    <property type="entry name" value="Dxr"/>
    <property type="match status" value="1"/>
</dbReference>
<dbReference type="PANTHER" id="PTHR30525">
    <property type="entry name" value="1-DEOXY-D-XYLULOSE 5-PHOSPHATE REDUCTOISOMERASE"/>
    <property type="match status" value="1"/>
</dbReference>
<dbReference type="PANTHER" id="PTHR30525:SF0">
    <property type="entry name" value="1-DEOXY-D-XYLULOSE 5-PHOSPHATE REDUCTOISOMERASE, CHLOROPLASTIC"/>
    <property type="match status" value="1"/>
</dbReference>
<dbReference type="Pfam" id="PF08436">
    <property type="entry name" value="DXP_redisom_C"/>
    <property type="match status" value="1"/>
</dbReference>
<dbReference type="Pfam" id="PF02670">
    <property type="entry name" value="DXP_reductoisom"/>
    <property type="match status" value="1"/>
</dbReference>
<dbReference type="Pfam" id="PF13288">
    <property type="entry name" value="DXPR_C"/>
    <property type="match status" value="1"/>
</dbReference>
<dbReference type="PIRSF" id="PIRSF006205">
    <property type="entry name" value="Dxp_reductismrs"/>
    <property type="match status" value="1"/>
</dbReference>
<dbReference type="SUPFAM" id="SSF69055">
    <property type="entry name" value="1-deoxy-D-xylulose-5-phosphate reductoisomerase, C-terminal domain"/>
    <property type="match status" value="1"/>
</dbReference>
<dbReference type="SUPFAM" id="SSF55347">
    <property type="entry name" value="Glyceraldehyde-3-phosphate dehydrogenase-like, C-terminal domain"/>
    <property type="match status" value="1"/>
</dbReference>
<dbReference type="SUPFAM" id="SSF51735">
    <property type="entry name" value="NAD(P)-binding Rossmann-fold domains"/>
    <property type="match status" value="1"/>
</dbReference>